<proteinExistence type="inferred from homology"/>
<accession>Q31L19</accession>
<sequence length="179" mass="20016">MSLKTKYRDIIVPKLMKEFGYTNIHQVPKVVKVTINRGLGEGAQNAKALESSLAEIAKIAGQKPVVTRAKKAIAGFKIRAGMPVGLMVTLRGDRRDAFLERLINLSLPRIRDFRGISPRSFDGRGNYTLGLREQLIFPEITYDSIDQIRGMDITIVTSANSDEEGRALLRELGMPFREN</sequence>
<protein>
    <recommendedName>
        <fullName evidence="1">Large ribosomal subunit protein uL5</fullName>
    </recommendedName>
    <alternativeName>
        <fullName evidence="2">50S ribosomal protein L5</fullName>
    </alternativeName>
</protein>
<gene>
    <name evidence="1" type="primary">rplE</name>
    <name evidence="1" type="synonym">rpl5</name>
    <name type="ordered locus">Synpcc7942_2220</name>
</gene>
<keyword id="KW-1185">Reference proteome</keyword>
<keyword id="KW-0687">Ribonucleoprotein</keyword>
<keyword id="KW-0689">Ribosomal protein</keyword>
<keyword id="KW-0694">RNA-binding</keyword>
<keyword id="KW-0699">rRNA-binding</keyword>
<keyword id="KW-0820">tRNA-binding</keyword>
<reference key="1">
    <citation type="submission" date="2005-08" db="EMBL/GenBank/DDBJ databases">
        <title>Complete sequence of chromosome 1 of Synechococcus elongatus PCC 7942.</title>
        <authorList>
            <consortium name="US DOE Joint Genome Institute"/>
            <person name="Copeland A."/>
            <person name="Lucas S."/>
            <person name="Lapidus A."/>
            <person name="Barry K."/>
            <person name="Detter J.C."/>
            <person name="Glavina T."/>
            <person name="Hammon N."/>
            <person name="Israni S."/>
            <person name="Pitluck S."/>
            <person name="Schmutz J."/>
            <person name="Larimer F."/>
            <person name="Land M."/>
            <person name="Kyrpides N."/>
            <person name="Lykidis A."/>
            <person name="Golden S."/>
            <person name="Richardson P."/>
        </authorList>
    </citation>
    <scope>NUCLEOTIDE SEQUENCE [LARGE SCALE GENOMIC DNA]</scope>
    <source>
        <strain>ATCC 33912 / PCC 7942 / FACHB-805</strain>
    </source>
</reference>
<name>RL5_SYNE7</name>
<evidence type="ECO:0000255" key="1">
    <source>
        <dbReference type="HAMAP-Rule" id="MF_01333"/>
    </source>
</evidence>
<evidence type="ECO:0000305" key="2"/>
<dbReference type="EMBL" id="CP000100">
    <property type="protein sequence ID" value="ABB58250.1"/>
    <property type="molecule type" value="Genomic_DNA"/>
</dbReference>
<dbReference type="RefSeq" id="WP_011244187.1">
    <property type="nucleotide sequence ID" value="NZ_JACJTX010000001.1"/>
</dbReference>
<dbReference type="SMR" id="Q31L19"/>
<dbReference type="STRING" id="1140.Synpcc7942_2220"/>
<dbReference type="PaxDb" id="1140-Synpcc7942_2220"/>
<dbReference type="GeneID" id="72431103"/>
<dbReference type="KEGG" id="syf:Synpcc7942_2220"/>
<dbReference type="eggNOG" id="COG0094">
    <property type="taxonomic scope" value="Bacteria"/>
</dbReference>
<dbReference type="HOGENOM" id="CLU_061015_2_1_3"/>
<dbReference type="OrthoDB" id="9806626at2"/>
<dbReference type="BioCyc" id="SYNEL:SYNPCC7942_2220-MONOMER"/>
<dbReference type="Proteomes" id="UP000889800">
    <property type="component" value="Chromosome"/>
</dbReference>
<dbReference type="GO" id="GO:1990904">
    <property type="term" value="C:ribonucleoprotein complex"/>
    <property type="evidence" value="ECO:0007669"/>
    <property type="project" value="UniProtKB-KW"/>
</dbReference>
<dbReference type="GO" id="GO:0005840">
    <property type="term" value="C:ribosome"/>
    <property type="evidence" value="ECO:0007669"/>
    <property type="project" value="UniProtKB-KW"/>
</dbReference>
<dbReference type="GO" id="GO:0019843">
    <property type="term" value="F:rRNA binding"/>
    <property type="evidence" value="ECO:0007669"/>
    <property type="project" value="UniProtKB-UniRule"/>
</dbReference>
<dbReference type="GO" id="GO:0003735">
    <property type="term" value="F:structural constituent of ribosome"/>
    <property type="evidence" value="ECO:0007669"/>
    <property type="project" value="InterPro"/>
</dbReference>
<dbReference type="GO" id="GO:0000049">
    <property type="term" value="F:tRNA binding"/>
    <property type="evidence" value="ECO:0007669"/>
    <property type="project" value="UniProtKB-UniRule"/>
</dbReference>
<dbReference type="GO" id="GO:0006412">
    <property type="term" value="P:translation"/>
    <property type="evidence" value="ECO:0007669"/>
    <property type="project" value="UniProtKB-UniRule"/>
</dbReference>
<dbReference type="FunFam" id="3.30.1440.10:FF:000001">
    <property type="entry name" value="50S ribosomal protein L5"/>
    <property type="match status" value="1"/>
</dbReference>
<dbReference type="Gene3D" id="3.30.1440.10">
    <property type="match status" value="1"/>
</dbReference>
<dbReference type="HAMAP" id="MF_01333_B">
    <property type="entry name" value="Ribosomal_uL5_B"/>
    <property type="match status" value="1"/>
</dbReference>
<dbReference type="InterPro" id="IPR002132">
    <property type="entry name" value="Ribosomal_uL5"/>
</dbReference>
<dbReference type="InterPro" id="IPR020930">
    <property type="entry name" value="Ribosomal_uL5_bac-type"/>
</dbReference>
<dbReference type="InterPro" id="IPR031309">
    <property type="entry name" value="Ribosomal_uL5_C"/>
</dbReference>
<dbReference type="InterPro" id="IPR020929">
    <property type="entry name" value="Ribosomal_uL5_CS"/>
</dbReference>
<dbReference type="InterPro" id="IPR022803">
    <property type="entry name" value="Ribosomal_uL5_dom_sf"/>
</dbReference>
<dbReference type="InterPro" id="IPR031310">
    <property type="entry name" value="Ribosomal_uL5_N"/>
</dbReference>
<dbReference type="NCBIfam" id="NF000585">
    <property type="entry name" value="PRK00010.1"/>
    <property type="match status" value="1"/>
</dbReference>
<dbReference type="PANTHER" id="PTHR11994">
    <property type="entry name" value="60S RIBOSOMAL PROTEIN L11-RELATED"/>
    <property type="match status" value="1"/>
</dbReference>
<dbReference type="Pfam" id="PF00281">
    <property type="entry name" value="Ribosomal_L5"/>
    <property type="match status" value="1"/>
</dbReference>
<dbReference type="Pfam" id="PF00673">
    <property type="entry name" value="Ribosomal_L5_C"/>
    <property type="match status" value="1"/>
</dbReference>
<dbReference type="PIRSF" id="PIRSF002161">
    <property type="entry name" value="Ribosomal_L5"/>
    <property type="match status" value="1"/>
</dbReference>
<dbReference type="SUPFAM" id="SSF55282">
    <property type="entry name" value="RL5-like"/>
    <property type="match status" value="1"/>
</dbReference>
<dbReference type="PROSITE" id="PS00358">
    <property type="entry name" value="RIBOSOMAL_L5"/>
    <property type="match status" value="1"/>
</dbReference>
<organism>
    <name type="scientific">Synechococcus elongatus (strain ATCC 33912 / PCC 7942 / FACHB-805)</name>
    <name type="common">Anacystis nidulans R2</name>
    <dbReference type="NCBI Taxonomy" id="1140"/>
    <lineage>
        <taxon>Bacteria</taxon>
        <taxon>Bacillati</taxon>
        <taxon>Cyanobacteriota</taxon>
        <taxon>Cyanophyceae</taxon>
        <taxon>Synechococcales</taxon>
        <taxon>Synechococcaceae</taxon>
        <taxon>Synechococcus</taxon>
    </lineage>
</organism>
<comment type="function">
    <text evidence="1">This is one of the proteins that bind and probably mediate the attachment of the 5S RNA into the large ribosomal subunit, where it forms part of the central protuberance. In the 70S ribosome it contacts protein S13 of the 30S subunit (bridge B1b), connecting the 2 subunits; this bridge is implicated in subunit movement. Contacts the P site tRNA; the 5S rRNA and some of its associated proteins might help stabilize positioning of ribosome-bound tRNAs.</text>
</comment>
<comment type="subunit">
    <text evidence="1">Part of the 50S ribosomal subunit; part of the 5S rRNA/L5/L18/L25 subcomplex. Contacts the 5S rRNA and the P site tRNA. Forms a bridge to the 30S subunit in the 70S ribosome.</text>
</comment>
<comment type="similarity">
    <text evidence="1">Belongs to the universal ribosomal protein uL5 family.</text>
</comment>
<feature type="chain" id="PRO_0000243078" description="Large ribosomal subunit protein uL5">
    <location>
        <begin position="1"/>
        <end position="179"/>
    </location>
</feature>